<evidence type="ECO:0000255" key="1">
    <source>
        <dbReference type="HAMAP-Rule" id="MF_00917"/>
    </source>
</evidence>
<evidence type="ECO:0000255" key="2">
    <source>
        <dbReference type="PROSITE-ProRule" id="PRU01266"/>
    </source>
</evidence>
<dbReference type="EC" id="4.3.99.3" evidence="1"/>
<dbReference type="EMBL" id="AE001437">
    <property type="protein sequence ID" value="AAK81548.1"/>
    <property type="molecule type" value="Genomic_DNA"/>
</dbReference>
<dbReference type="PIR" id="A97345">
    <property type="entry name" value="A97345"/>
</dbReference>
<dbReference type="RefSeq" id="NP_350208.1">
    <property type="nucleotide sequence ID" value="NC_003030.1"/>
</dbReference>
<dbReference type="RefSeq" id="WP_010966888.1">
    <property type="nucleotide sequence ID" value="NC_003030.1"/>
</dbReference>
<dbReference type="SMR" id="Q97D55"/>
<dbReference type="STRING" id="272562.CA_C3625"/>
<dbReference type="GeneID" id="45000123"/>
<dbReference type="KEGG" id="cac:CA_C3625"/>
<dbReference type="PATRIC" id="fig|272562.8.peg.3815"/>
<dbReference type="eggNOG" id="COG0602">
    <property type="taxonomic scope" value="Bacteria"/>
</dbReference>
<dbReference type="HOGENOM" id="CLU_066739_2_0_9"/>
<dbReference type="OrthoDB" id="9792276at2"/>
<dbReference type="UniPathway" id="UPA00391"/>
<dbReference type="Proteomes" id="UP000000814">
    <property type="component" value="Chromosome"/>
</dbReference>
<dbReference type="GO" id="GO:0051539">
    <property type="term" value="F:4 iron, 4 sulfur cluster binding"/>
    <property type="evidence" value="ECO:0007669"/>
    <property type="project" value="UniProtKB-UniRule"/>
</dbReference>
<dbReference type="GO" id="GO:0016840">
    <property type="term" value="F:carbon-nitrogen lyase activity"/>
    <property type="evidence" value="ECO:0007669"/>
    <property type="project" value="UniProtKB-UniRule"/>
</dbReference>
<dbReference type="GO" id="GO:0000287">
    <property type="term" value="F:magnesium ion binding"/>
    <property type="evidence" value="ECO:0007669"/>
    <property type="project" value="UniProtKB-UniRule"/>
</dbReference>
<dbReference type="GO" id="GO:1904047">
    <property type="term" value="F:S-adenosyl-L-methionine binding"/>
    <property type="evidence" value="ECO:0007669"/>
    <property type="project" value="UniProtKB-UniRule"/>
</dbReference>
<dbReference type="GO" id="GO:0008616">
    <property type="term" value="P:queuosine biosynthetic process"/>
    <property type="evidence" value="ECO:0007669"/>
    <property type="project" value="UniProtKB-UniRule"/>
</dbReference>
<dbReference type="CDD" id="cd01335">
    <property type="entry name" value="Radical_SAM"/>
    <property type="match status" value="1"/>
</dbReference>
<dbReference type="Gene3D" id="3.20.20.70">
    <property type="entry name" value="Aldolase class I"/>
    <property type="match status" value="1"/>
</dbReference>
<dbReference type="HAMAP" id="MF_00917">
    <property type="entry name" value="QueE"/>
    <property type="match status" value="1"/>
</dbReference>
<dbReference type="InterPro" id="IPR023868">
    <property type="entry name" value="7-CO-7-deazaGua_synth_put_Clo"/>
</dbReference>
<dbReference type="InterPro" id="IPR024924">
    <property type="entry name" value="7-CO-7-deazaguanine_synth-like"/>
</dbReference>
<dbReference type="InterPro" id="IPR013785">
    <property type="entry name" value="Aldolase_TIM"/>
</dbReference>
<dbReference type="InterPro" id="IPR007197">
    <property type="entry name" value="rSAM"/>
</dbReference>
<dbReference type="NCBIfam" id="TIGR03963">
    <property type="entry name" value="rSAM_QueE_Clost"/>
    <property type="match status" value="1"/>
</dbReference>
<dbReference type="PANTHER" id="PTHR42836">
    <property type="entry name" value="7-CARBOXY-7-DEAZAGUANINE SYNTHASE"/>
    <property type="match status" value="1"/>
</dbReference>
<dbReference type="PANTHER" id="PTHR42836:SF1">
    <property type="entry name" value="7-CARBOXY-7-DEAZAGUANINE SYNTHASE"/>
    <property type="match status" value="1"/>
</dbReference>
<dbReference type="Pfam" id="PF13353">
    <property type="entry name" value="Fer4_12"/>
    <property type="match status" value="1"/>
</dbReference>
<dbReference type="Pfam" id="PF04055">
    <property type="entry name" value="Radical_SAM"/>
    <property type="match status" value="1"/>
</dbReference>
<dbReference type="PIRSF" id="PIRSF000370">
    <property type="entry name" value="QueE"/>
    <property type="match status" value="1"/>
</dbReference>
<dbReference type="SFLD" id="SFLDS00029">
    <property type="entry name" value="Radical_SAM"/>
    <property type="match status" value="1"/>
</dbReference>
<dbReference type="SFLD" id="SFLDG01067">
    <property type="entry name" value="SPASM/twitch_domain_containing"/>
    <property type="match status" value="1"/>
</dbReference>
<dbReference type="SUPFAM" id="SSF102114">
    <property type="entry name" value="Radical SAM enzymes"/>
    <property type="match status" value="1"/>
</dbReference>
<dbReference type="PROSITE" id="PS51918">
    <property type="entry name" value="RADICAL_SAM"/>
    <property type="match status" value="1"/>
</dbReference>
<name>QUEE_CLOAB</name>
<organism>
    <name type="scientific">Clostridium acetobutylicum (strain ATCC 824 / DSM 792 / JCM 1419 / IAM 19013 / LMG 5710 / NBRC 13948 / NRRL B-527 / VKM B-1787 / 2291 / W)</name>
    <dbReference type="NCBI Taxonomy" id="272562"/>
    <lineage>
        <taxon>Bacteria</taxon>
        <taxon>Bacillati</taxon>
        <taxon>Bacillota</taxon>
        <taxon>Clostridia</taxon>
        <taxon>Eubacteriales</taxon>
        <taxon>Clostridiaceae</taxon>
        <taxon>Clostridium</taxon>
    </lineage>
</organism>
<accession>Q97D55</accession>
<feature type="chain" id="PRO_0000416202" description="7-carboxy-7-deazaguanine synthase">
    <location>
        <begin position="1"/>
        <end position="221"/>
    </location>
</feature>
<feature type="domain" description="Radical SAM core" evidence="2">
    <location>
        <begin position="18"/>
        <end position="216"/>
    </location>
</feature>
<feature type="binding site" evidence="1">
    <location>
        <begin position="12"/>
        <end position="14"/>
    </location>
    <ligand>
        <name>substrate</name>
    </ligand>
</feature>
<feature type="binding site" evidence="1">
    <location>
        <position position="27"/>
    </location>
    <ligand>
        <name>substrate</name>
    </ligand>
</feature>
<feature type="binding site" evidence="1">
    <location>
        <position position="31"/>
    </location>
    <ligand>
        <name>[4Fe-4S] cluster</name>
        <dbReference type="ChEBI" id="CHEBI:49883"/>
        <note>4Fe-4S-S-AdoMet</note>
    </ligand>
</feature>
<feature type="binding site" evidence="1">
    <location>
        <position position="35"/>
    </location>
    <ligand>
        <name>[4Fe-4S] cluster</name>
        <dbReference type="ChEBI" id="CHEBI:49883"/>
        <note>4Fe-4S-S-AdoMet</note>
    </ligand>
</feature>
<feature type="binding site" evidence="1">
    <location>
        <position position="38"/>
    </location>
    <ligand>
        <name>[4Fe-4S] cluster</name>
        <dbReference type="ChEBI" id="CHEBI:49883"/>
        <note>4Fe-4S-S-AdoMet</note>
    </ligand>
</feature>
<feature type="binding site" evidence="1">
    <location>
        <position position="40"/>
    </location>
    <ligand>
        <name>Mg(2+)</name>
        <dbReference type="ChEBI" id="CHEBI:18420"/>
    </ligand>
</feature>
<feature type="binding site" evidence="1">
    <location>
        <position position="73"/>
    </location>
    <ligand>
        <name>substrate</name>
    </ligand>
</feature>
<feature type="binding site" evidence="1">
    <location>
        <position position="75"/>
    </location>
    <ligand>
        <name>S-adenosyl-L-methionine</name>
        <dbReference type="ChEBI" id="CHEBI:59789"/>
    </ligand>
</feature>
<proteinExistence type="inferred from homology"/>
<keyword id="KW-0004">4Fe-4S</keyword>
<keyword id="KW-0408">Iron</keyword>
<keyword id="KW-0411">Iron-sulfur</keyword>
<keyword id="KW-0456">Lyase</keyword>
<keyword id="KW-0460">Magnesium</keyword>
<keyword id="KW-0479">Metal-binding</keyword>
<keyword id="KW-0671">Queuosine biosynthesis</keyword>
<keyword id="KW-1185">Reference proteome</keyword>
<keyword id="KW-0949">S-adenosyl-L-methionine</keyword>
<reference key="1">
    <citation type="journal article" date="2001" name="J. Bacteriol.">
        <title>Genome sequence and comparative analysis of the solvent-producing bacterium Clostridium acetobutylicum.</title>
        <authorList>
            <person name="Noelling J."/>
            <person name="Breton G."/>
            <person name="Omelchenko M.V."/>
            <person name="Makarova K.S."/>
            <person name="Zeng Q."/>
            <person name="Gibson R."/>
            <person name="Lee H.M."/>
            <person name="Dubois J."/>
            <person name="Qiu D."/>
            <person name="Hitti J."/>
            <person name="Wolf Y.I."/>
            <person name="Tatusov R.L."/>
            <person name="Sabathe F."/>
            <person name="Doucette-Stamm L.A."/>
            <person name="Soucaille P."/>
            <person name="Daly M.J."/>
            <person name="Bennett G.N."/>
            <person name="Koonin E.V."/>
            <person name="Smith D.R."/>
        </authorList>
    </citation>
    <scope>NUCLEOTIDE SEQUENCE [LARGE SCALE GENOMIC DNA]</scope>
    <source>
        <strain>ATCC 824 / DSM 792 / JCM 1419 / IAM 19013 / LMG 5710 / NBRC 13948 / NRRL B-527 / VKM B-1787 / 2291 / W</strain>
    </source>
</reference>
<sequence>MNYKVVEKFVSINGEGLKSGQLSVFIRFAGCNLNCNYCDTKWANEKDVKYTLMTEKEILSYIKETGVKNVTLTGGEPLLQDGIVELLNLLSLDSTLRVEIETNGSVSLENFLNFKNAPSFTMDYKLPDSSMENFMKTSNFKFLNKKDVIKFVVSSLKDLKKAMDIITEFNLSKKTNIYISPVFGRISPETIVDFMKDNKLNDVTLQIQIHKIIWNPNKRGV</sequence>
<protein>
    <recommendedName>
        <fullName evidence="1">7-carboxy-7-deazaguanine synthase</fullName>
        <shortName evidence="1">CDG synthase</shortName>
        <ecNumber evidence="1">4.3.99.3</ecNumber>
    </recommendedName>
    <alternativeName>
        <fullName evidence="1">Queuosine biosynthesis protein QueE</fullName>
    </alternativeName>
</protein>
<gene>
    <name evidence="1" type="primary">queE</name>
    <name type="ordered locus">CA_C3625</name>
</gene>
<comment type="function">
    <text evidence="1">Catalyzes the complex heterocyclic radical-mediated conversion of 6-carboxy-5,6,7,8-tetrahydropterin (CPH4) to 7-carboxy-7-deazaguanine (CDG), a step common to the biosynthetic pathways of all 7-deazapurine-containing compounds.</text>
</comment>
<comment type="catalytic activity">
    <reaction evidence="1">
        <text>6-carboxy-5,6,7,8-tetrahydropterin + H(+) = 7-carboxy-7-deazaguanine + NH4(+)</text>
        <dbReference type="Rhea" id="RHEA:27974"/>
        <dbReference type="ChEBI" id="CHEBI:15378"/>
        <dbReference type="ChEBI" id="CHEBI:28938"/>
        <dbReference type="ChEBI" id="CHEBI:61032"/>
        <dbReference type="ChEBI" id="CHEBI:61036"/>
        <dbReference type="EC" id="4.3.99.3"/>
    </reaction>
</comment>
<comment type="cofactor">
    <cofactor evidence="1">
        <name>[4Fe-4S] cluster</name>
        <dbReference type="ChEBI" id="CHEBI:49883"/>
    </cofactor>
    <text evidence="1">Binds 1 [4Fe-4S] cluster. The cluster is coordinated with 3 cysteines and an exchangeable S-adenosyl-L-methionine.</text>
</comment>
<comment type="cofactor">
    <cofactor evidence="1">
        <name>S-adenosyl-L-methionine</name>
        <dbReference type="ChEBI" id="CHEBI:59789"/>
    </cofactor>
    <text evidence="1">Binds 1 S-adenosyl-L-methionine per subunit.</text>
</comment>
<comment type="cofactor">
    <cofactor evidence="1">
        <name>Mg(2+)</name>
        <dbReference type="ChEBI" id="CHEBI:18420"/>
    </cofactor>
</comment>
<comment type="pathway">
    <text evidence="1">Purine metabolism; 7-cyano-7-deazaguanine biosynthesis.</text>
</comment>
<comment type="subunit">
    <text evidence="1">Homodimer.</text>
</comment>
<comment type="similarity">
    <text evidence="1">Belongs to the radical SAM superfamily. 7-carboxy-7-deazaguanine synthase family.</text>
</comment>